<name>CPXS1_PAUCH</name>
<proteinExistence type="inferred from homology"/>
<reference key="1">
    <citation type="journal article" date="2008" name="Curr. Biol.">
        <title>Chromatophore genome sequence of Paulinella sheds light on acquisition of photosynthesis by eukaryotes.</title>
        <authorList>
            <person name="Nowack E.C.M."/>
            <person name="Melkonian M."/>
            <person name="Gloeckner G."/>
        </authorList>
    </citation>
    <scope>NUCLEOTIDE SEQUENCE [LARGE SCALE GENOMIC DNA]</scope>
</reference>
<dbReference type="EC" id="4.-.-.-" evidence="1"/>
<dbReference type="EMBL" id="CP000815">
    <property type="protein sequence ID" value="ACB42590.1"/>
    <property type="molecule type" value="Genomic_DNA"/>
</dbReference>
<dbReference type="RefSeq" id="YP_002048800.1">
    <property type="nucleotide sequence ID" value="NC_011087.1"/>
</dbReference>
<dbReference type="SMR" id="B1X3S1"/>
<dbReference type="GeneID" id="6481320"/>
<dbReference type="GO" id="GO:0070111">
    <property type="term" value="C:organellar chromatophore"/>
    <property type="evidence" value="ECO:0007669"/>
    <property type="project" value="UniProtKB-SubCell"/>
</dbReference>
<dbReference type="GO" id="GO:0009536">
    <property type="term" value="C:plastid"/>
    <property type="evidence" value="ECO:0007669"/>
    <property type="project" value="UniProtKB-KW"/>
</dbReference>
<dbReference type="GO" id="GO:0016829">
    <property type="term" value="F:lyase activity"/>
    <property type="evidence" value="ECO:0007669"/>
    <property type="project" value="UniProtKB-KW"/>
</dbReference>
<dbReference type="CDD" id="cd16339">
    <property type="entry name" value="CpcS"/>
    <property type="match status" value="1"/>
</dbReference>
<dbReference type="Gene3D" id="2.40.128.20">
    <property type="match status" value="1"/>
</dbReference>
<dbReference type="HAMAP" id="MF_01459">
    <property type="entry name" value="Chrphore_lyase_CpxS"/>
    <property type="match status" value="1"/>
</dbReference>
<dbReference type="InterPro" id="IPR012674">
    <property type="entry name" value="Calycin"/>
</dbReference>
<dbReference type="InterPro" id="IPR018536">
    <property type="entry name" value="CpcS/CpeS"/>
</dbReference>
<dbReference type="Pfam" id="PF09367">
    <property type="entry name" value="CpeS"/>
    <property type="match status" value="1"/>
</dbReference>
<gene>
    <name evidence="1" type="primary">cpcS1</name>
    <name type="ordered locus">PCC_0138</name>
</gene>
<sequence length="157" mass="17972">MYGYPVTTVFPPVSIEDFLSLSIGHWISLRSQFKCSSIDDNWHSSERGDIKLALGPSDNSNTRNLAISMGSQYAMKLEFFLDGRLQSENCIIGTWQIWPDGSLELSYHDANGNEQCERIWFMKTNLRLRSTVAFNQDGTLRQASFCSEIRRVTKHKL</sequence>
<evidence type="ECO:0000255" key="1">
    <source>
        <dbReference type="HAMAP-Rule" id="MF_01459"/>
    </source>
</evidence>
<keyword id="KW-0456">Lyase</keyword>
<keyword id="KW-0994">Organellar chromatophore</keyword>
<keyword id="KW-0934">Plastid</keyword>
<geneLocation type="organellar chromatophore"/>
<accession>B1X3S1</accession>
<comment type="function">
    <text evidence="1">Covalently attaches a chromophore to Cys residue(s) of phycobiliproteins.</text>
</comment>
<comment type="subcellular location">
    <subcellularLocation>
        <location>Plastid</location>
        <location>Organellar chromatophore</location>
    </subcellularLocation>
</comment>
<comment type="similarity">
    <text evidence="1">Belongs to the CpcS/CpeS biliprotein lyase family.</text>
</comment>
<feature type="chain" id="PRO_0000403150" description="Chromophore lyase CpcS/CpeS 1">
    <location>
        <begin position="1"/>
        <end position="157"/>
    </location>
</feature>
<organism>
    <name type="scientific">Paulinella chromatophora</name>
    <dbReference type="NCBI Taxonomy" id="39717"/>
    <lineage>
        <taxon>Eukaryota</taxon>
        <taxon>Sar</taxon>
        <taxon>Rhizaria</taxon>
        <taxon>Cercozoa</taxon>
        <taxon>Imbricatea</taxon>
        <taxon>Silicofilosea</taxon>
        <taxon>Euglyphida</taxon>
        <taxon>Paulinellidae</taxon>
        <taxon>Paulinella</taxon>
    </lineage>
</organism>
<protein>
    <recommendedName>
        <fullName evidence="1">Chromophore lyase CpcS/CpeS 1</fullName>
        <ecNumber evidence="1">4.-.-.-</ecNumber>
    </recommendedName>
</protein>